<keyword id="KW-0028">Amino-acid biosynthesis</keyword>
<keyword id="KW-0032">Aminotransferase</keyword>
<keyword id="KW-0963">Cytoplasm</keyword>
<keyword id="KW-0663">Pyridoxal phosphate</keyword>
<keyword id="KW-1185">Reference proteome</keyword>
<keyword id="KW-0718">Serine biosynthesis</keyword>
<keyword id="KW-0808">Transferase</keyword>
<dbReference type="EC" id="2.6.1.52" evidence="1"/>
<dbReference type="EMBL" id="AM946015">
    <property type="protein sequence ID" value="CAR41114.1"/>
    <property type="molecule type" value="Genomic_DNA"/>
</dbReference>
<dbReference type="RefSeq" id="WP_012657980.1">
    <property type="nucleotide sequence ID" value="NC_012004.1"/>
</dbReference>
<dbReference type="SMR" id="B9DTW4"/>
<dbReference type="STRING" id="218495.SUB0445"/>
<dbReference type="KEGG" id="sub:SUB0445"/>
<dbReference type="eggNOG" id="COG1932">
    <property type="taxonomic scope" value="Bacteria"/>
</dbReference>
<dbReference type="HOGENOM" id="CLU_034866_0_2_9"/>
<dbReference type="OrthoDB" id="9809412at2"/>
<dbReference type="UniPathway" id="UPA00135">
    <property type="reaction ID" value="UER00197"/>
</dbReference>
<dbReference type="Proteomes" id="UP000000449">
    <property type="component" value="Chromosome"/>
</dbReference>
<dbReference type="GO" id="GO:0005737">
    <property type="term" value="C:cytoplasm"/>
    <property type="evidence" value="ECO:0007669"/>
    <property type="project" value="UniProtKB-SubCell"/>
</dbReference>
<dbReference type="GO" id="GO:0004648">
    <property type="term" value="F:O-phospho-L-serine:2-oxoglutarate aminotransferase activity"/>
    <property type="evidence" value="ECO:0007669"/>
    <property type="project" value="UniProtKB-UniRule"/>
</dbReference>
<dbReference type="GO" id="GO:0030170">
    <property type="term" value="F:pyridoxal phosphate binding"/>
    <property type="evidence" value="ECO:0007669"/>
    <property type="project" value="UniProtKB-UniRule"/>
</dbReference>
<dbReference type="GO" id="GO:0006564">
    <property type="term" value="P:L-serine biosynthetic process"/>
    <property type="evidence" value="ECO:0007669"/>
    <property type="project" value="UniProtKB-UniRule"/>
</dbReference>
<dbReference type="FunFam" id="3.40.640.10:FF:000010">
    <property type="entry name" value="Phosphoserine aminotransferase"/>
    <property type="match status" value="1"/>
</dbReference>
<dbReference type="FunFam" id="3.90.1150.10:FF:000006">
    <property type="entry name" value="Phosphoserine aminotransferase"/>
    <property type="match status" value="1"/>
</dbReference>
<dbReference type="Gene3D" id="3.90.1150.10">
    <property type="entry name" value="Aspartate Aminotransferase, domain 1"/>
    <property type="match status" value="1"/>
</dbReference>
<dbReference type="Gene3D" id="3.40.640.10">
    <property type="entry name" value="Type I PLP-dependent aspartate aminotransferase-like (Major domain)"/>
    <property type="match status" value="1"/>
</dbReference>
<dbReference type="HAMAP" id="MF_00160">
    <property type="entry name" value="SerC_aminotrans_5"/>
    <property type="match status" value="1"/>
</dbReference>
<dbReference type="InterPro" id="IPR000192">
    <property type="entry name" value="Aminotrans_V_dom"/>
</dbReference>
<dbReference type="InterPro" id="IPR020578">
    <property type="entry name" value="Aminotrans_V_PyrdxlP_BS"/>
</dbReference>
<dbReference type="InterPro" id="IPR022278">
    <property type="entry name" value="Pser_aminoTfrase"/>
</dbReference>
<dbReference type="InterPro" id="IPR015424">
    <property type="entry name" value="PyrdxlP-dep_Trfase"/>
</dbReference>
<dbReference type="InterPro" id="IPR015421">
    <property type="entry name" value="PyrdxlP-dep_Trfase_major"/>
</dbReference>
<dbReference type="InterPro" id="IPR015422">
    <property type="entry name" value="PyrdxlP-dep_Trfase_small"/>
</dbReference>
<dbReference type="NCBIfam" id="NF003764">
    <property type="entry name" value="PRK05355.1"/>
    <property type="match status" value="1"/>
</dbReference>
<dbReference type="NCBIfam" id="TIGR01364">
    <property type="entry name" value="serC_1"/>
    <property type="match status" value="1"/>
</dbReference>
<dbReference type="PANTHER" id="PTHR43247">
    <property type="entry name" value="PHOSPHOSERINE AMINOTRANSFERASE"/>
    <property type="match status" value="1"/>
</dbReference>
<dbReference type="PANTHER" id="PTHR43247:SF1">
    <property type="entry name" value="PHOSPHOSERINE AMINOTRANSFERASE"/>
    <property type="match status" value="1"/>
</dbReference>
<dbReference type="Pfam" id="PF00266">
    <property type="entry name" value="Aminotran_5"/>
    <property type="match status" value="1"/>
</dbReference>
<dbReference type="PIRSF" id="PIRSF000525">
    <property type="entry name" value="SerC"/>
    <property type="match status" value="1"/>
</dbReference>
<dbReference type="SUPFAM" id="SSF53383">
    <property type="entry name" value="PLP-dependent transferases"/>
    <property type="match status" value="1"/>
</dbReference>
<dbReference type="PROSITE" id="PS00595">
    <property type="entry name" value="AA_TRANSFER_CLASS_5"/>
    <property type="match status" value="1"/>
</dbReference>
<sequence>MTIYNFSAGPAVLPKPVLEKAQAEMLDYRSSGMSVLEMSHRSKEFDAIIKDAEYLLRELMAIPDHYRVLFLQGGASTQFSMIPLNLAKGKKAYYHVAGSWGKKAYTEAVKLSKTIPFEPILLASSEEETFSYVPTFDKDVIDPDAAYVHLTTNNTIEGTALYDIPDTNGVPIVADMSSNILAVRYKVNDFGMIYAGAQKNIGPAGVTVVIIRNDLLNSEPALSSMLDYKIQADAQSLYNTPPAYSIYIAKMVFEWVKSLGGLDQMEVKNREKSGLLYSFIEQSSFYQSPVKNPKDRSVANIPFTTPSKDLDEKFVKEAEAAGFKNIKGHRSVGGMRASLYNAFPVEGVIALIDFMRVFENQNSQ</sequence>
<gene>
    <name evidence="1" type="primary">serC</name>
    <name type="ordered locus">SUB0445</name>
</gene>
<name>SERC_STRU0</name>
<feature type="chain" id="PRO_1000123477" description="Phosphoserine aminotransferase">
    <location>
        <begin position="1"/>
        <end position="364"/>
    </location>
</feature>
<feature type="binding site" evidence="1">
    <location>
        <position position="41"/>
    </location>
    <ligand>
        <name>L-glutamate</name>
        <dbReference type="ChEBI" id="CHEBI:29985"/>
    </ligand>
</feature>
<feature type="binding site" evidence="1">
    <location>
        <begin position="75"/>
        <end position="76"/>
    </location>
    <ligand>
        <name>pyridoxal 5'-phosphate</name>
        <dbReference type="ChEBI" id="CHEBI:597326"/>
    </ligand>
</feature>
<feature type="binding site" evidence="1">
    <location>
        <position position="100"/>
    </location>
    <ligand>
        <name>pyridoxal 5'-phosphate</name>
        <dbReference type="ChEBI" id="CHEBI:597326"/>
    </ligand>
</feature>
<feature type="binding site" evidence="1">
    <location>
        <position position="155"/>
    </location>
    <ligand>
        <name>pyridoxal 5'-phosphate</name>
        <dbReference type="ChEBI" id="CHEBI:597326"/>
    </ligand>
</feature>
<feature type="binding site" evidence="1">
    <location>
        <position position="175"/>
    </location>
    <ligand>
        <name>pyridoxal 5'-phosphate</name>
        <dbReference type="ChEBI" id="CHEBI:597326"/>
    </ligand>
</feature>
<feature type="binding site" evidence="1">
    <location>
        <position position="198"/>
    </location>
    <ligand>
        <name>pyridoxal 5'-phosphate</name>
        <dbReference type="ChEBI" id="CHEBI:597326"/>
    </ligand>
</feature>
<feature type="binding site" evidence="1">
    <location>
        <begin position="239"/>
        <end position="240"/>
    </location>
    <ligand>
        <name>pyridoxal 5'-phosphate</name>
        <dbReference type="ChEBI" id="CHEBI:597326"/>
    </ligand>
</feature>
<feature type="modified residue" description="N6-(pyridoxal phosphate)lysine" evidence="1">
    <location>
        <position position="199"/>
    </location>
</feature>
<organism>
    <name type="scientific">Streptococcus uberis (strain ATCC BAA-854 / 0140J)</name>
    <dbReference type="NCBI Taxonomy" id="218495"/>
    <lineage>
        <taxon>Bacteria</taxon>
        <taxon>Bacillati</taxon>
        <taxon>Bacillota</taxon>
        <taxon>Bacilli</taxon>
        <taxon>Lactobacillales</taxon>
        <taxon>Streptococcaceae</taxon>
        <taxon>Streptococcus</taxon>
    </lineage>
</organism>
<accession>B9DTW4</accession>
<protein>
    <recommendedName>
        <fullName evidence="1">Phosphoserine aminotransferase</fullName>
        <ecNumber evidence="1">2.6.1.52</ecNumber>
    </recommendedName>
    <alternativeName>
        <fullName evidence="1">Phosphohydroxythreonine aminotransferase</fullName>
        <shortName evidence="1">PSAT</shortName>
    </alternativeName>
</protein>
<proteinExistence type="inferred from homology"/>
<reference key="1">
    <citation type="journal article" date="2009" name="BMC Genomics">
        <title>Evidence for niche adaptation in the genome of the bovine pathogen Streptococcus uberis.</title>
        <authorList>
            <person name="Ward P.N."/>
            <person name="Holden M.T.G."/>
            <person name="Leigh J.A."/>
            <person name="Lennard N."/>
            <person name="Bignell A."/>
            <person name="Barron A."/>
            <person name="Clark L."/>
            <person name="Quail M.A."/>
            <person name="Woodward J."/>
            <person name="Barrell B.G."/>
            <person name="Egan S.A."/>
            <person name="Field T.R."/>
            <person name="Maskell D."/>
            <person name="Kehoe M."/>
            <person name="Dowson C.G."/>
            <person name="Chanter N."/>
            <person name="Whatmore A.M."/>
            <person name="Bentley S.D."/>
            <person name="Parkhill J."/>
        </authorList>
    </citation>
    <scope>NUCLEOTIDE SEQUENCE [LARGE SCALE GENOMIC DNA]</scope>
    <source>
        <strain>ATCC BAA-854 / 0140J</strain>
    </source>
</reference>
<comment type="function">
    <text evidence="1">Catalyzes the reversible conversion of 3-phosphohydroxypyruvate to phosphoserine and of 3-hydroxy-2-oxo-4-phosphonooxybutanoate to phosphohydroxythreonine.</text>
</comment>
<comment type="catalytic activity">
    <reaction evidence="1">
        <text>O-phospho-L-serine + 2-oxoglutarate = 3-phosphooxypyruvate + L-glutamate</text>
        <dbReference type="Rhea" id="RHEA:14329"/>
        <dbReference type="ChEBI" id="CHEBI:16810"/>
        <dbReference type="ChEBI" id="CHEBI:18110"/>
        <dbReference type="ChEBI" id="CHEBI:29985"/>
        <dbReference type="ChEBI" id="CHEBI:57524"/>
        <dbReference type="EC" id="2.6.1.52"/>
    </reaction>
</comment>
<comment type="catalytic activity">
    <reaction evidence="1">
        <text>4-(phosphooxy)-L-threonine + 2-oxoglutarate = (R)-3-hydroxy-2-oxo-4-phosphooxybutanoate + L-glutamate</text>
        <dbReference type="Rhea" id="RHEA:16573"/>
        <dbReference type="ChEBI" id="CHEBI:16810"/>
        <dbReference type="ChEBI" id="CHEBI:29985"/>
        <dbReference type="ChEBI" id="CHEBI:58452"/>
        <dbReference type="ChEBI" id="CHEBI:58538"/>
        <dbReference type="EC" id="2.6.1.52"/>
    </reaction>
</comment>
<comment type="cofactor">
    <cofactor evidence="1">
        <name>pyridoxal 5'-phosphate</name>
        <dbReference type="ChEBI" id="CHEBI:597326"/>
    </cofactor>
    <text evidence="1">Binds 1 pyridoxal phosphate per subunit.</text>
</comment>
<comment type="pathway">
    <text evidence="1">Amino-acid biosynthesis; L-serine biosynthesis; L-serine from 3-phospho-D-glycerate: step 2/3.</text>
</comment>
<comment type="subunit">
    <text evidence="1">Homodimer.</text>
</comment>
<comment type="subcellular location">
    <subcellularLocation>
        <location evidence="1">Cytoplasm</location>
    </subcellularLocation>
</comment>
<comment type="similarity">
    <text evidence="1">Belongs to the class-V pyridoxal-phosphate-dependent aminotransferase family. SerC subfamily.</text>
</comment>
<evidence type="ECO:0000255" key="1">
    <source>
        <dbReference type="HAMAP-Rule" id="MF_00160"/>
    </source>
</evidence>